<proteinExistence type="inferred from homology"/>
<dbReference type="EMBL" id="AF322977">
    <property type="protein sequence ID" value="ABG36587.1"/>
    <property type="molecule type" value="Genomic_DNA"/>
</dbReference>
<dbReference type="InterPro" id="IPR004280">
    <property type="entry name" value="Herpes_UL95"/>
</dbReference>
<dbReference type="Pfam" id="PF03038">
    <property type="entry name" value="Herpes_UL95"/>
    <property type="match status" value="1"/>
</dbReference>
<feature type="chain" id="PRO_0000408173" description="Protein U67">
    <location>
        <begin position="1"/>
        <end position="367"/>
    </location>
</feature>
<protein>
    <recommendedName>
        <fullName>Protein U67</fullName>
    </recommendedName>
</protein>
<organism>
    <name type="scientific">Elephantid herpesvirus 1 (isolate Asian elephant/Berlin/Kiba/1998)</name>
    <name type="common">EIHV-1</name>
    <name type="synonym">Elephant endotheliotropic herpesvirus</name>
    <dbReference type="NCBI Taxonomy" id="654902"/>
    <lineage>
        <taxon>Viruses</taxon>
        <taxon>Duplodnaviria</taxon>
        <taxon>Heunggongvirae</taxon>
        <taxon>Peploviricota</taxon>
        <taxon>Herviviricetes</taxon>
        <taxon>Herpesvirales</taxon>
        <taxon>Orthoherpesviridae</taxon>
        <taxon>Betaherpesvirinae</taxon>
        <taxon>Proboscivirus</taxon>
        <taxon>Proboscivirus elephantidbeta1</taxon>
        <taxon>Elephantid herpesvirus 1</taxon>
    </lineage>
</organism>
<organismHost>
    <name type="scientific">Elephas maximus</name>
    <name type="common">Indian elephant</name>
    <dbReference type="NCBI Taxonomy" id="9783"/>
</organismHost>
<organismHost>
    <name type="scientific">Loxodonta africana</name>
    <name type="common">African elephant</name>
    <dbReference type="NCBI Taxonomy" id="9785"/>
</organismHost>
<organismHost>
    <name type="scientific">Loxodonta cyclotis</name>
    <name type="common">African forest elephant</name>
    <dbReference type="NCBI Taxonomy" id="99490"/>
</organismHost>
<name>UL95_ELHVK</name>
<sequence length="367" mass="41636">MDWLCKLEEDWKDSVFRDAVKDSLDICGAISPNERFTFVETPHHSFLLVTNILPDEHGVIKDKKLTPGDLITPSVTSVPVGNAKDLNHDIYQSSESSNGKTVLQKGCLRPNNSNYLMFNAKHIPEHHTLFTNAYVSYSKEDIQTSLSFNKSAFISKILSRCNVPGILDHNNVIHVDMLLWLLFAGPLSCCSRTHCFGYTRPDIRRPFPVVLPPILYNDSVDIKMFVNMAEIYVYGWYGDDKIKSFETTFFKNEELQAMIGELRAKYVRKSVPLWHVNSRICLFCALYLQNRLCLENLKHDVNKIPLSPIIIQDCVFNDTNISCQPTVAVGHITPGTNVTKLFPVYQLDKLLSYISLQPDGTCVITSP</sequence>
<comment type="similarity">
    <text evidence="1">Belongs to the herpesviridae UL95 family.</text>
</comment>
<reference key="1">
    <citation type="journal article" date="2007" name="J. Virol.">
        <title>Identification of novel rodent herpesviruses, including the first gammaherpesvirus of Mus musculus.</title>
        <authorList>
            <person name="Ehlers B."/>
            <person name="Kuchler J."/>
            <person name="Yasmum N."/>
            <person name="Dural G."/>
            <person name="Voigt S."/>
            <person name="Schmidt-Chanasit J."/>
            <person name="Jakel T."/>
            <person name="Matuschka F.R."/>
            <person name="Richter D."/>
            <person name="Essbauer S."/>
            <person name="Hughes D.J."/>
            <person name="Summers C."/>
            <person name="Bennett M."/>
            <person name="Stewart J.P."/>
            <person name="Ulrich R.G."/>
        </authorList>
    </citation>
    <scope>NUCLEOTIDE SEQUENCE [GENOMIC DNA]</scope>
</reference>
<reference key="2">
    <citation type="journal article" date="2001" name="J. Gen. Virol.">
        <title>Genetic and ultrastructural characterization of a European isolate of the fatal endotheliotropic elephant herpesvirus.</title>
        <authorList>
            <person name="Ehlers B."/>
            <person name="Burkhardt S."/>
            <person name="Goltz M."/>
            <person name="Bergmann V."/>
            <person name="Ochs A."/>
            <person name="Weiler H."/>
            <person name="Hentschke J."/>
        </authorList>
    </citation>
    <scope>NUCLEOTIDE SEQUENCE [GENOMIC DNA]</scope>
</reference>
<evidence type="ECO:0000305" key="1"/>
<accession>Q18LD2</accession>